<dbReference type="EMBL" id="CP000918">
    <property type="protein sequence ID" value="ACO16292.1"/>
    <property type="molecule type" value="Genomic_DNA"/>
</dbReference>
<dbReference type="SMR" id="C1C8F9"/>
<dbReference type="KEGG" id="snm:SP70585_1609"/>
<dbReference type="HOGENOM" id="CLU_033732_3_0_9"/>
<dbReference type="Proteomes" id="UP000002211">
    <property type="component" value="Chromosome"/>
</dbReference>
<dbReference type="GO" id="GO:0005829">
    <property type="term" value="C:cytosol"/>
    <property type="evidence" value="ECO:0007669"/>
    <property type="project" value="TreeGrafter"/>
</dbReference>
<dbReference type="GO" id="GO:0005525">
    <property type="term" value="F:GTP binding"/>
    <property type="evidence" value="ECO:0007669"/>
    <property type="project" value="UniProtKB-UniRule"/>
</dbReference>
<dbReference type="GO" id="GO:0046872">
    <property type="term" value="F:metal ion binding"/>
    <property type="evidence" value="ECO:0007669"/>
    <property type="project" value="UniProtKB-KW"/>
</dbReference>
<dbReference type="GO" id="GO:0000917">
    <property type="term" value="P:division septum assembly"/>
    <property type="evidence" value="ECO:0007669"/>
    <property type="project" value="UniProtKB-KW"/>
</dbReference>
<dbReference type="CDD" id="cd01876">
    <property type="entry name" value="YihA_EngB"/>
    <property type="match status" value="1"/>
</dbReference>
<dbReference type="FunFam" id="3.40.50.300:FF:000098">
    <property type="entry name" value="Probable GTP-binding protein EngB"/>
    <property type="match status" value="1"/>
</dbReference>
<dbReference type="Gene3D" id="3.40.50.300">
    <property type="entry name" value="P-loop containing nucleotide triphosphate hydrolases"/>
    <property type="match status" value="1"/>
</dbReference>
<dbReference type="HAMAP" id="MF_00321">
    <property type="entry name" value="GTPase_EngB"/>
    <property type="match status" value="1"/>
</dbReference>
<dbReference type="InterPro" id="IPR030393">
    <property type="entry name" value="G_ENGB_dom"/>
</dbReference>
<dbReference type="InterPro" id="IPR006073">
    <property type="entry name" value="GTP-bd"/>
</dbReference>
<dbReference type="InterPro" id="IPR019987">
    <property type="entry name" value="GTP-bd_ribosome_bio_YsxC"/>
</dbReference>
<dbReference type="InterPro" id="IPR027417">
    <property type="entry name" value="P-loop_NTPase"/>
</dbReference>
<dbReference type="NCBIfam" id="TIGR03598">
    <property type="entry name" value="GTPase_YsxC"/>
    <property type="match status" value="1"/>
</dbReference>
<dbReference type="PANTHER" id="PTHR11649:SF13">
    <property type="entry name" value="ENGB-TYPE G DOMAIN-CONTAINING PROTEIN"/>
    <property type="match status" value="1"/>
</dbReference>
<dbReference type="PANTHER" id="PTHR11649">
    <property type="entry name" value="MSS1/TRME-RELATED GTP-BINDING PROTEIN"/>
    <property type="match status" value="1"/>
</dbReference>
<dbReference type="Pfam" id="PF01926">
    <property type="entry name" value="MMR_HSR1"/>
    <property type="match status" value="1"/>
</dbReference>
<dbReference type="PRINTS" id="PR00449">
    <property type="entry name" value="RASTRNSFRMNG"/>
</dbReference>
<dbReference type="SUPFAM" id="SSF52540">
    <property type="entry name" value="P-loop containing nucleoside triphosphate hydrolases"/>
    <property type="match status" value="1"/>
</dbReference>
<dbReference type="PROSITE" id="PS51706">
    <property type="entry name" value="G_ENGB"/>
    <property type="match status" value="1"/>
</dbReference>
<protein>
    <recommendedName>
        <fullName evidence="1">Probable GTP-binding protein EngB</fullName>
    </recommendedName>
</protein>
<keyword id="KW-0131">Cell cycle</keyword>
<keyword id="KW-0132">Cell division</keyword>
<keyword id="KW-0342">GTP-binding</keyword>
<keyword id="KW-0460">Magnesium</keyword>
<keyword id="KW-0479">Metal-binding</keyword>
<keyword id="KW-0547">Nucleotide-binding</keyword>
<keyword id="KW-0717">Septation</keyword>
<evidence type="ECO:0000255" key="1">
    <source>
        <dbReference type="HAMAP-Rule" id="MF_00321"/>
    </source>
</evidence>
<reference key="1">
    <citation type="journal article" date="2010" name="Genome Biol.">
        <title>Structure and dynamics of the pan-genome of Streptococcus pneumoniae and closely related species.</title>
        <authorList>
            <person name="Donati C."/>
            <person name="Hiller N.L."/>
            <person name="Tettelin H."/>
            <person name="Muzzi A."/>
            <person name="Croucher N.J."/>
            <person name="Angiuoli S.V."/>
            <person name="Oggioni M."/>
            <person name="Dunning Hotopp J.C."/>
            <person name="Hu F.Z."/>
            <person name="Riley D.R."/>
            <person name="Covacci A."/>
            <person name="Mitchell T.J."/>
            <person name="Bentley S.D."/>
            <person name="Kilian M."/>
            <person name="Ehrlich G.D."/>
            <person name="Rappuoli R."/>
            <person name="Moxon E.R."/>
            <person name="Masignani V."/>
        </authorList>
    </citation>
    <scope>NUCLEOTIDE SEQUENCE [LARGE SCALE GENOMIC DNA]</scope>
    <source>
        <strain>70585</strain>
    </source>
</reference>
<organism>
    <name type="scientific">Streptococcus pneumoniae (strain 70585)</name>
    <dbReference type="NCBI Taxonomy" id="488221"/>
    <lineage>
        <taxon>Bacteria</taxon>
        <taxon>Bacillati</taxon>
        <taxon>Bacillota</taxon>
        <taxon>Bacilli</taxon>
        <taxon>Lactobacillales</taxon>
        <taxon>Streptococcaceae</taxon>
        <taxon>Streptococcus</taxon>
    </lineage>
</organism>
<comment type="function">
    <text evidence="1">Necessary for normal cell division and for the maintenance of normal septation.</text>
</comment>
<comment type="cofactor">
    <cofactor evidence="1">
        <name>Mg(2+)</name>
        <dbReference type="ChEBI" id="CHEBI:18420"/>
    </cofactor>
</comment>
<comment type="similarity">
    <text evidence="1">Belongs to the TRAFAC class TrmE-Era-EngA-EngB-Septin-like GTPase superfamily. EngB GTPase family.</text>
</comment>
<gene>
    <name evidence="1" type="primary">engB</name>
    <name type="ordered locus">SP70585_1609</name>
</gene>
<name>ENGB_STRP7</name>
<accession>C1C8F9</accession>
<sequence>MELNTHNAEILLSAANKSHYPQDELPEIALAGRSNVGKSSFINTMLNRKNLARTSGKPGKTQLLNFFNIDDKMRFVDVPGYGYARVSKKEREKWGCMIEEYLTTRENLRAVVSLVDLRHDPSADDVQMYEFLKYYEIPVIIVATKADKIPRGKWNKHESAIKKKLNFDPSDDFILFSSVSKAGMDEAWDAILEKL</sequence>
<proteinExistence type="inferred from homology"/>
<feature type="chain" id="PRO_1000189936" description="Probable GTP-binding protein EngB">
    <location>
        <begin position="1"/>
        <end position="195"/>
    </location>
</feature>
<feature type="domain" description="EngB-type G" evidence="1">
    <location>
        <begin position="24"/>
        <end position="195"/>
    </location>
</feature>
<feature type="binding site" evidence="1">
    <location>
        <begin position="32"/>
        <end position="39"/>
    </location>
    <ligand>
        <name>GTP</name>
        <dbReference type="ChEBI" id="CHEBI:37565"/>
    </ligand>
</feature>
<feature type="binding site" evidence="1">
    <location>
        <position position="39"/>
    </location>
    <ligand>
        <name>Mg(2+)</name>
        <dbReference type="ChEBI" id="CHEBI:18420"/>
    </ligand>
</feature>
<feature type="binding site" evidence="1">
    <location>
        <begin position="59"/>
        <end position="63"/>
    </location>
    <ligand>
        <name>GTP</name>
        <dbReference type="ChEBI" id="CHEBI:37565"/>
    </ligand>
</feature>
<feature type="binding site" evidence="1">
    <location>
        <position position="61"/>
    </location>
    <ligand>
        <name>Mg(2+)</name>
        <dbReference type="ChEBI" id="CHEBI:18420"/>
    </ligand>
</feature>
<feature type="binding site" evidence="1">
    <location>
        <begin position="77"/>
        <end position="80"/>
    </location>
    <ligand>
        <name>GTP</name>
        <dbReference type="ChEBI" id="CHEBI:37565"/>
    </ligand>
</feature>
<feature type="binding site" evidence="1">
    <location>
        <begin position="144"/>
        <end position="147"/>
    </location>
    <ligand>
        <name>GTP</name>
        <dbReference type="ChEBI" id="CHEBI:37565"/>
    </ligand>
</feature>
<feature type="binding site" evidence="1">
    <location>
        <begin position="176"/>
        <end position="178"/>
    </location>
    <ligand>
        <name>GTP</name>
        <dbReference type="ChEBI" id="CHEBI:37565"/>
    </ligand>
</feature>